<reference key="1">
    <citation type="journal article" date="2002" name="Nat. Biotechnol.">
        <title>Genome sequence of the dissimilatory metal ion-reducing bacterium Shewanella oneidensis.</title>
        <authorList>
            <person name="Heidelberg J.F."/>
            <person name="Paulsen I.T."/>
            <person name="Nelson K.E."/>
            <person name="Gaidos E.J."/>
            <person name="Nelson W.C."/>
            <person name="Read T.D."/>
            <person name="Eisen J.A."/>
            <person name="Seshadri R."/>
            <person name="Ward N.L."/>
            <person name="Methe B.A."/>
            <person name="Clayton R.A."/>
            <person name="Meyer T."/>
            <person name="Tsapin A."/>
            <person name="Scott J."/>
            <person name="Beanan M.J."/>
            <person name="Brinkac L.M."/>
            <person name="Daugherty S.C."/>
            <person name="DeBoy R.T."/>
            <person name="Dodson R.J."/>
            <person name="Durkin A.S."/>
            <person name="Haft D.H."/>
            <person name="Kolonay J.F."/>
            <person name="Madupu R."/>
            <person name="Peterson J.D."/>
            <person name="Umayam L.A."/>
            <person name="White O."/>
            <person name="Wolf A.M."/>
            <person name="Vamathevan J.J."/>
            <person name="Weidman J.F."/>
            <person name="Impraim M."/>
            <person name="Lee K."/>
            <person name="Berry K.J."/>
            <person name="Lee C."/>
            <person name="Mueller J."/>
            <person name="Khouri H.M."/>
            <person name="Gill J."/>
            <person name="Utterback T.R."/>
            <person name="McDonald L.A."/>
            <person name="Feldblyum T.V."/>
            <person name="Smith H.O."/>
            <person name="Venter J.C."/>
            <person name="Nealson K.H."/>
            <person name="Fraser C.M."/>
        </authorList>
    </citation>
    <scope>NUCLEOTIDE SEQUENCE [LARGE SCALE GENOMIC DNA]</scope>
    <source>
        <strain>ATCC 700550 / JCM 31522 / CIP 106686 / LMG 19005 / NCIMB 14063 / MR-1</strain>
    </source>
</reference>
<feature type="chain" id="PRO_0000152920" description="Sulfur carrier protein FdhD">
    <location>
        <begin position="1"/>
        <end position="278"/>
    </location>
</feature>
<feature type="active site" description="Cysteine persulfide intermediate" evidence="1">
    <location>
        <position position="113"/>
    </location>
</feature>
<feature type="binding site" evidence="1">
    <location>
        <begin position="251"/>
        <end position="256"/>
    </location>
    <ligand>
        <name>Mo-bis(molybdopterin guanine dinucleotide)</name>
        <dbReference type="ChEBI" id="CHEBI:60539"/>
    </ligand>
</feature>
<comment type="function">
    <text evidence="1">Required for formate dehydrogenase (FDH) activity. Acts as a sulfur carrier protein that transfers sulfur from IscS to the molybdenum cofactor prior to its insertion into FDH.</text>
</comment>
<comment type="subcellular location">
    <subcellularLocation>
        <location evidence="1">Cytoplasm</location>
    </subcellularLocation>
</comment>
<comment type="similarity">
    <text evidence="1">Belongs to the FdhD family.</text>
</comment>
<accession>Q8EKI6</accession>
<keyword id="KW-0963">Cytoplasm</keyword>
<keyword id="KW-0501">Molybdenum cofactor biosynthesis</keyword>
<keyword id="KW-1185">Reference proteome</keyword>
<evidence type="ECO:0000255" key="1">
    <source>
        <dbReference type="HAMAP-Rule" id="MF_00187"/>
    </source>
</evidence>
<dbReference type="EMBL" id="AE014299">
    <property type="protein sequence ID" value="AAN53194.1"/>
    <property type="molecule type" value="Genomic_DNA"/>
</dbReference>
<dbReference type="RefSeq" id="NP_715749.1">
    <property type="nucleotide sequence ID" value="NC_004347.2"/>
</dbReference>
<dbReference type="RefSeq" id="WP_011070515.1">
    <property type="nucleotide sequence ID" value="NC_004347.2"/>
</dbReference>
<dbReference type="SMR" id="Q8EKI6"/>
<dbReference type="STRING" id="211586.SO_0107"/>
<dbReference type="PaxDb" id="211586-SO_0107"/>
<dbReference type="KEGG" id="son:SO_0107"/>
<dbReference type="PATRIC" id="fig|211586.12.peg.106"/>
<dbReference type="eggNOG" id="COG1526">
    <property type="taxonomic scope" value="Bacteria"/>
</dbReference>
<dbReference type="HOGENOM" id="CLU_056887_2_0_6"/>
<dbReference type="OrthoDB" id="3197277at2"/>
<dbReference type="PhylomeDB" id="Q8EKI6"/>
<dbReference type="BioCyc" id="SONE211586:G1GMP-104-MONOMER"/>
<dbReference type="Proteomes" id="UP000008186">
    <property type="component" value="Chromosome"/>
</dbReference>
<dbReference type="GO" id="GO:0005737">
    <property type="term" value="C:cytoplasm"/>
    <property type="evidence" value="ECO:0007669"/>
    <property type="project" value="UniProtKB-SubCell"/>
</dbReference>
<dbReference type="GO" id="GO:0097163">
    <property type="term" value="F:sulfur carrier activity"/>
    <property type="evidence" value="ECO:0007669"/>
    <property type="project" value="UniProtKB-UniRule"/>
</dbReference>
<dbReference type="GO" id="GO:0016783">
    <property type="term" value="F:sulfurtransferase activity"/>
    <property type="evidence" value="ECO:0007669"/>
    <property type="project" value="InterPro"/>
</dbReference>
<dbReference type="GO" id="GO:0006777">
    <property type="term" value="P:Mo-molybdopterin cofactor biosynthetic process"/>
    <property type="evidence" value="ECO:0007669"/>
    <property type="project" value="UniProtKB-UniRule"/>
</dbReference>
<dbReference type="Gene3D" id="3.10.20.10">
    <property type="match status" value="1"/>
</dbReference>
<dbReference type="Gene3D" id="3.40.140.10">
    <property type="entry name" value="Cytidine Deaminase, domain 2"/>
    <property type="match status" value="1"/>
</dbReference>
<dbReference type="HAMAP" id="MF_00187">
    <property type="entry name" value="FdhD"/>
    <property type="match status" value="1"/>
</dbReference>
<dbReference type="InterPro" id="IPR016193">
    <property type="entry name" value="Cytidine_deaminase-like"/>
</dbReference>
<dbReference type="InterPro" id="IPR003786">
    <property type="entry name" value="FdhD"/>
</dbReference>
<dbReference type="NCBIfam" id="TIGR00129">
    <property type="entry name" value="fdhD_narQ"/>
    <property type="match status" value="1"/>
</dbReference>
<dbReference type="PANTHER" id="PTHR30592">
    <property type="entry name" value="FORMATE DEHYDROGENASE"/>
    <property type="match status" value="1"/>
</dbReference>
<dbReference type="PANTHER" id="PTHR30592:SF1">
    <property type="entry name" value="SULFUR CARRIER PROTEIN FDHD"/>
    <property type="match status" value="1"/>
</dbReference>
<dbReference type="Pfam" id="PF02634">
    <property type="entry name" value="FdhD-NarQ"/>
    <property type="match status" value="1"/>
</dbReference>
<dbReference type="PIRSF" id="PIRSF015626">
    <property type="entry name" value="FdhD"/>
    <property type="match status" value="1"/>
</dbReference>
<dbReference type="SUPFAM" id="SSF53927">
    <property type="entry name" value="Cytidine deaminase-like"/>
    <property type="match status" value="1"/>
</dbReference>
<name>FDHD_SHEON</name>
<gene>
    <name evidence="1" type="primary">fdhD</name>
    <name type="ordered locus">SO_0107</name>
</gene>
<proteinExistence type="inferred from homology"/>
<organism>
    <name type="scientific">Shewanella oneidensis (strain ATCC 700550 / JCM 31522 / CIP 106686 / LMG 19005 / NCIMB 14063 / MR-1)</name>
    <dbReference type="NCBI Taxonomy" id="211586"/>
    <lineage>
        <taxon>Bacteria</taxon>
        <taxon>Pseudomonadati</taxon>
        <taxon>Pseudomonadota</taxon>
        <taxon>Gammaproteobacteria</taxon>
        <taxon>Alteromonadales</taxon>
        <taxon>Shewanellaceae</taxon>
        <taxon>Shewanella</taxon>
    </lineage>
</organism>
<protein>
    <recommendedName>
        <fullName evidence="1">Sulfur carrier protein FdhD</fullName>
    </recommendedName>
</protein>
<sequence>MEYHSHTVVTERKVTLLEQGQASDLTDYVANEVRVALVYNGISHTVMLASPENLEEFAIGFTLSERIVSHVNEIKGVDLEFTPEGVLIQVEITQRCFMALKQLRRNMAGRTGCGLCGVAQLEEAVKPVIRVDSDARFNIDHLQFALEQVKDNQHHFKLTGATHAAMGLDLEGQIIAAYEDIGRHIALDKLIGGCSMRHAKRPVAVLLTSRASFEMVQKAASANIQILFAMSAVTSLALELAEKSNITLIGFCRNGRATLYTHGYRLLGLNRASLAKAI</sequence>